<feature type="chain" id="PRO_1000130416" description="Ureidoglycolate lyase">
    <location>
        <begin position="1"/>
        <end position="160"/>
    </location>
</feature>
<protein>
    <recommendedName>
        <fullName evidence="1">Ureidoglycolate lyase</fullName>
        <ecNumber evidence="1">4.3.2.3</ecNumber>
    </recommendedName>
    <alternativeName>
        <fullName evidence="1">Ureidoglycolatase</fullName>
    </alternativeName>
</protein>
<sequence>MKLQVLPLSQEAFSAYGDVIETQQRDFFHINNGLVERYHDLALVEILEQDRTLISINRAQPANLPLTIHELERHPLGTQAFIPMKGEVFVVVVALGDDKPDLSTLRAFITNGEQGVNYHRNVWHHPLFAWQRVTDFLTIDRGGSDNCDVESIPEQELCFA</sequence>
<evidence type="ECO:0000255" key="1">
    <source>
        <dbReference type="HAMAP-Rule" id="MF_00616"/>
    </source>
</evidence>
<gene>
    <name evidence="1" type="primary">allA</name>
    <name type="ordered locus">ECSE_0531</name>
</gene>
<comment type="function">
    <text evidence="1">Catalyzes the catabolism of the allantoin degradation intermediate (S)-ureidoglycolate, generating urea and glyoxylate. Involved in the anaerobic utilization of allantoin as sole nitrogen source. Reinforces the induction of genes involved in the degradation of allantoin and glyoxylate by producing glyoxylate.</text>
</comment>
<comment type="catalytic activity">
    <reaction evidence="1">
        <text>(S)-ureidoglycolate = urea + glyoxylate</text>
        <dbReference type="Rhea" id="RHEA:11304"/>
        <dbReference type="ChEBI" id="CHEBI:16199"/>
        <dbReference type="ChEBI" id="CHEBI:36655"/>
        <dbReference type="ChEBI" id="CHEBI:57296"/>
        <dbReference type="EC" id="4.3.2.3"/>
    </reaction>
</comment>
<comment type="cofactor">
    <cofactor evidence="1">
        <name>Ni(2+)</name>
        <dbReference type="ChEBI" id="CHEBI:49786"/>
    </cofactor>
</comment>
<comment type="pathway">
    <text evidence="1">Nitrogen metabolism; (S)-allantoin degradation.</text>
</comment>
<comment type="subunit">
    <text evidence="1">Homodimer.</text>
</comment>
<comment type="similarity">
    <text evidence="1">Belongs to the ureidoglycolate lyase family.</text>
</comment>
<reference key="1">
    <citation type="journal article" date="2008" name="DNA Res.">
        <title>Complete genome sequence and comparative analysis of the wild-type commensal Escherichia coli strain SE11 isolated from a healthy adult.</title>
        <authorList>
            <person name="Oshima K."/>
            <person name="Toh H."/>
            <person name="Ogura Y."/>
            <person name="Sasamoto H."/>
            <person name="Morita H."/>
            <person name="Park S.-H."/>
            <person name="Ooka T."/>
            <person name="Iyoda S."/>
            <person name="Taylor T.D."/>
            <person name="Hayashi T."/>
            <person name="Itoh K."/>
            <person name="Hattori M."/>
        </authorList>
    </citation>
    <scope>NUCLEOTIDE SEQUENCE [LARGE SCALE GENOMIC DNA]</scope>
    <source>
        <strain>SE11</strain>
    </source>
</reference>
<dbReference type="EC" id="4.3.2.3" evidence="1"/>
<dbReference type="EMBL" id="AP009240">
    <property type="protein sequence ID" value="BAG76055.1"/>
    <property type="molecule type" value="Genomic_DNA"/>
</dbReference>
<dbReference type="RefSeq" id="WP_000776388.1">
    <property type="nucleotide sequence ID" value="NC_011415.1"/>
</dbReference>
<dbReference type="SMR" id="B6I0F6"/>
<dbReference type="GeneID" id="75202348"/>
<dbReference type="KEGG" id="ecy:ECSE_0531"/>
<dbReference type="HOGENOM" id="CLU_070848_1_1_6"/>
<dbReference type="UniPathway" id="UPA00395"/>
<dbReference type="Proteomes" id="UP000008199">
    <property type="component" value="Chromosome"/>
</dbReference>
<dbReference type="GO" id="GO:0004848">
    <property type="term" value="F:ureidoglycolate hydrolase activity"/>
    <property type="evidence" value="ECO:0007669"/>
    <property type="project" value="InterPro"/>
</dbReference>
<dbReference type="GO" id="GO:0050385">
    <property type="term" value="F:ureidoglycolate lyase activity"/>
    <property type="evidence" value="ECO:0007669"/>
    <property type="project" value="UniProtKB-UniRule"/>
</dbReference>
<dbReference type="GO" id="GO:0000256">
    <property type="term" value="P:allantoin catabolic process"/>
    <property type="evidence" value="ECO:0007669"/>
    <property type="project" value="UniProtKB-UniRule"/>
</dbReference>
<dbReference type="GO" id="GO:0006145">
    <property type="term" value="P:purine nucleobase catabolic process"/>
    <property type="evidence" value="ECO:0007669"/>
    <property type="project" value="UniProtKB-UniRule"/>
</dbReference>
<dbReference type="CDD" id="cd20298">
    <property type="entry name" value="cupin_UAH"/>
    <property type="match status" value="1"/>
</dbReference>
<dbReference type="FunFam" id="2.60.120.480:FF:000001">
    <property type="entry name" value="Ureidoglycolate lyase"/>
    <property type="match status" value="1"/>
</dbReference>
<dbReference type="Gene3D" id="2.60.120.480">
    <property type="entry name" value="Ureidoglycolate hydrolase"/>
    <property type="match status" value="1"/>
</dbReference>
<dbReference type="HAMAP" id="MF_00616">
    <property type="entry name" value="Ureidogly_lyase"/>
    <property type="match status" value="1"/>
</dbReference>
<dbReference type="InterPro" id="IPR011051">
    <property type="entry name" value="RmlC_Cupin_sf"/>
</dbReference>
<dbReference type="InterPro" id="IPR047233">
    <property type="entry name" value="UAH_cupin"/>
</dbReference>
<dbReference type="InterPro" id="IPR007247">
    <property type="entry name" value="Ureidogly_lyase"/>
</dbReference>
<dbReference type="InterPro" id="IPR023525">
    <property type="entry name" value="Ureidogly_lyase_bac"/>
</dbReference>
<dbReference type="InterPro" id="IPR024060">
    <property type="entry name" value="Ureidoglycolate_lyase_dom_sf"/>
</dbReference>
<dbReference type="NCBIfam" id="NF002948">
    <property type="entry name" value="PRK03606.1-1"/>
    <property type="match status" value="1"/>
</dbReference>
<dbReference type="NCBIfam" id="NF009932">
    <property type="entry name" value="PRK13395.1"/>
    <property type="match status" value="1"/>
</dbReference>
<dbReference type="PANTHER" id="PTHR21221">
    <property type="entry name" value="UREIDOGLYCOLATE HYDROLASE"/>
    <property type="match status" value="1"/>
</dbReference>
<dbReference type="PANTHER" id="PTHR21221:SF1">
    <property type="entry name" value="UREIDOGLYCOLATE LYASE"/>
    <property type="match status" value="1"/>
</dbReference>
<dbReference type="Pfam" id="PF04115">
    <property type="entry name" value="Ureidogly_lyase"/>
    <property type="match status" value="1"/>
</dbReference>
<dbReference type="PIRSF" id="PIRSF017306">
    <property type="entry name" value="Ureidogly_hydro"/>
    <property type="match status" value="1"/>
</dbReference>
<dbReference type="SUPFAM" id="SSF51182">
    <property type="entry name" value="RmlC-like cupins"/>
    <property type="match status" value="1"/>
</dbReference>
<keyword id="KW-0456">Lyase</keyword>
<keyword id="KW-0659">Purine metabolism</keyword>
<organism>
    <name type="scientific">Escherichia coli (strain SE11)</name>
    <dbReference type="NCBI Taxonomy" id="409438"/>
    <lineage>
        <taxon>Bacteria</taxon>
        <taxon>Pseudomonadati</taxon>
        <taxon>Pseudomonadota</taxon>
        <taxon>Gammaproteobacteria</taxon>
        <taxon>Enterobacterales</taxon>
        <taxon>Enterobacteriaceae</taxon>
        <taxon>Escherichia</taxon>
    </lineage>
</organism>
<accession>B6I0F6</accession>
<proteinExistence type="inferred from homology"/>
<name>ALLA_ECOSE</name>